<organism>
    <name type="scientific">Leptospira interrogans serogroup Icterohaemorrhagiae serovar Lai (strain 56601)</name>
    <dbReference type="NCBI Taxonomy" id="189518"/>
    <lineage>
        <taxon>Bacteria</taxon>
        <taxon>Pseudomonadati</taxon>
        <taxon>Spirochaetota</taxon>
        <taxon>Spirochaetia</taxon>
        <taxon>Leptospirales</taxon>
        <taxon>Leptospiraceae</taxon>
        <taxon>Leptospira</taxon>
    </lineage>
</organism>
<keyword id="KW-0145">Chemotaxis</keyword>
<keyword id="KW-0378">Hydrolase</keyword>
<keyword id="KW-1185">Reference proteome</keyword>
<evidence type="ECO:0000255" key="1">
    <source>
        <dbReference type="HAMAP-Rule" id="MF_01440"/>
    </source>
</evidence>
<proteinExistence type="inferred from homology"/>
<accession>Q8EXT3</accession>
<protein>
    <recommendedName>
        <fullName evidence="1">Probable chemoreceptor glutamine deamidase CheD 2</fullName>
        <ecNumber evidence="1">3.5.1.44</ecNumber>
    </recommendedName>
</protein>
<comment type="function">
    <text evidence="1">Probably deamidates glutamine residues to glutamate on methyl-accepting chemotaxis receptors (MCPs), playing an important role in chemotaxis.</text>
</comment>
<comment type="catalytic activity">
    <reaction evidence="1">
        <text>L-glutaminyl-[protein] + H2O = L-glutamyl-[protein] + NH4(+)</text>
        <dbReference type="Rhea" id="RHEA:16441"/>
        <dbReference type="Rhea" id="RHEA-COMP:10207"/>
        <dbReference type="Rhea" id="RHEA-COMP:10208"/>
        <dbReference type="ChEBI" id="CHEBI:15377"/>
        <dbReference type="ChEBI" id="CHEBI:28938"/>
        <dbReference type="ChEBI" id="CHEBI:29973"/>
        <dbReference type="ChEBI" id="CHEBI:30011"/>
        <dbReference type="EC" id="3.5.1.44"/>
    </reaction>
</comment>
<comment type="similarity">
    <text evidence="1">Belongs to the CheD family.</text>
</comment>
<sequence length="168" mass="18325">MLTKGSKVVNVGIADMQGAQSPEILRTTLGSCIGVVFYAPDKKIGAMAHFMLSKDPSGKDSQKNPFKYAETAIPLLIKKMNEMGCNPGEYSVRLFGGASMFKGVQSSFLQNIGEQNILTARAILEQSKIPLILEDVGGNDGRTISLYLDDGRVLLKKGGFEKYLYKVR</sequence>
<dbReference type="EC" id="3.5.1.44" evidence="1"/>
<dbReference type="EMBL" id="AE010301">
    <property type="protein sequence ID" value="AAN51684.2"/>
    <property type="molecule type" value="Genomic_DNA"/>
</dbReference>
<dbReference type="RefSeq" id="NP_714669.2">
    <property type="nucleotide sequence ID" value="NC_004343.2"/>
</dbReference>
<dbReference type="RefSeq" id="WP_000956231.1">
    <property type="nucleotide sequence ID" value="NC_004343.2"/>
</dbReference>
<dbReference type="SMR" id="Q8EXT3"/>
<dbReference type="STRING" id="189518.LB_125"/>
<dbReference type="PaxDb" id="189518-LB_125"/>
<dbReference type="EnsemblBacteria" id="AAN51684">
    <property type="protein sequence ID" value="AAN51684"/>
    <property type="gene ID" value="LB_125"/>
</dbReference>
<dbReference type="KEGG" id="lil:LB_125"/>
<dbReference type="PATRIC" id="fig|189518.3.peg.4455"/>
<dbReference type="HOGENOM" id="CLU_087854_2_0_12"/>
<dbReference type="InParanoid" id="Q8EXT3"/>
<dbReference type="OrthoDB" id="9807202at2"/>
<dbReference type="Proteomes" id="UP000001408">
    <property type="component" value="Chromosome II"/>
</dbReference>
<dbReference type="GO" id="GO:0050568">
    <property type="term" value="F:protein-glutamine glutaminase activity"/>
    <property type="evidence" value="ECO:0007669"/>
    <property type="project" value="UniProtKB-UniRule"/>
</dbReference>
<dbReference type="GO" id="GO:0006935">
    <property type="term" value="P:chemotaxis"/>
    <property type="evidence" value="ECO:0007669"/>
    <property type="project" value="UniProtKB-UniRule"/>
</dbReference>
<dbReference type="CDD" id="cd16352">
    <property type="entry name" value="CheD"/>
    <property type="match status" value="1"/>
</dbReference>
<dbReference type="Gene3D" id="3.30.1330.200">
    <property type="match status" value="1"/>
</dbReference>
<dbReference type="HAMAP" id="MF_01440">
    <property type="entry name" value="CheD"/>
    <property type="match status" value="1"/>
</dbReference>
<dbReference type="InterPro" id="IPR038592">
    <property type="entry name" value="CheD-like_sf"/>
</dbReference>
<dbReference type="InterPro" id="IPR005659">
    <property type="entry name" value="Chemorcpt_Glu_NH3ase_CheD"/>
</dbReference>
<dbReference type="InterPro" id="IPR011324">
    <property type="entry name" value="Cytotoxic_necrot_fac-like_cat"/>
</dbReference>
<dbReference type="PANTHER" id="PTHR35147">
    <property type="entry name" value="CHEMORECEPTOR GLUTAMINE DEAMIDASE CHED-RELATED"/>
    <property type="match status" value="1"/>
</dbReference>
<dbReference type="PANTHER" id="PTHR35147:SF1">
    <property type="entry name" value="CHEMORECEPTOR GLUTAMINE DEAMIDASE CHED-RELATED"/>
    <property type="match status" value="1"/>
</dbReference>
<dbReference type="Pfam" id="PF03975">
    <property type="entry name" value="CheD"/>
    <property type="match status" value="1"/>
</dbReference>
<dbReference type="SUPFAM" id="SSF64438">
    <property type="entry name" value="CNF1/YfiH-like putative cysteine hydrolases"/>
    <property type="match status" value="1"/>
</dbReference>
<feature type="chain" id="PRO_0000251041" description="Probable chemoreceptor glutamine deamidase CheD 2">
    <location>
        <begin position="1"/>
        <end position="168"/>
    </location>
</feature>
<name>CHED2_LEPIN</name>
<gene>
    <name evidence="1" type="primary">cheD2</name>
    <name type="ordered locus">LB_125</name>
</gene>
<reference key="1">
    <citation type="journal article" date="2003" name="Nature">
        <title>Unique physiological and pathogenic features of Leptospira interrogans revealed by whole-genome sequencing.</title>
        <authorList>
            <person name="Ren S.-X."/>
            <person name="Fu G."/>
            <person name="Jiang X.-G."/>
            <person name="Zeng R."/>
            <person name="Miao Y.-G."/>
            <person name="Xu H."/>
            <person name="Zhang Y.-X."/>
            <person name="Xiong H."/>
            <person name="Lu G."/>
            <person name="Lu L.-F."/>
            <person name="Jiang H.-Q."/>
            <person name="Jia J."/>
            <person name="Tu Y.-F."/>
            <person name="Jiang J.-X."/>
            <person name="Gu W.-Y."/>
            <person name="Zhang Y.-Q."/>
            <person name="Cai Z."/>
            <person name="Sheng H.-H."/>
            <person name="Yin H.-F."/>
            <person name="Zhang Y."/>
            <person name="Zhu G.-F."/>
            <person name="Wan M."/>
            <person name="Huang H.-L."/>
            <person name="Qian Z."/>
            <person name="Wang S.-Y."/>
            <person name="Ma W."/>
            <person name="Yao Z.-J."/>
            <person name="Shen Y."/>
            <person name="Qiang B.-Q."/>
            <person name="Xia Q.-C."/>
            <person name="Guo X.-K."/>
            <person name="Danchin A."/>
            <person name="Saint Girons I."/>
            <person name="Somerville R.L."/>
            <person name="Wen Y.-M."/>
            <person name="Shi M.-H."/>
            <person name="Chen Z."/>
            <person name="Xu J.-G."/>
            <person name="Zhao G.-P."/>
        </authorList>
    </citation>
    <scope>NUCLEOTIDE SEQUENCE [LARGE SCALE GENOMIC DNA]</scope>
    <source>
        <strain>56601</strain>
    </source>
</reference>